<organism>
    <name type="scientific">Burkholderia mallei (strain NCTC 10229)</name>
    <dbReference type="NCBI Taxonomy" id="412022"/>
    <lineage>
        <taxon>Bacteria</taxon>
        <taxon>Pseudomonadati</taxon>
        <taxon>Pseudomonadota</taxon>
        <taxon>Betaproteobacteria</taxon>
        <taxon>Burkholderiales</taxon>
        <taxon>Burkholderiaceae</taxon>
        <taxon>Burkholderia</taxon>
        <taxon>pseudomallei group</taxon>
    </lineage>
</organism>
<dbReference type="EC" id="2.4.2.7" evidence="1"/>
<dbReference type="EMBL" id="CP000546">
    <property type="status" value="NOT_ANNOTATED_CDS"/>
    <property type="molecule type" value="Genomic_DNA"/>
</dbReference>
<dbReference type="RefSeq" id="WP_004195202.1">
    <property type="nucleotide sequence ID" value="NC_008836.1"/>
</dbReference>
<dbReference type="SMR" id="A2S6D4"/>
<dbReference type="UniPathway" id="UPA00588">
    <property type="reaction ID" value="UER00646"/>
</dbReference>
<dbReference type="Proteomes" id="UP000002283">
    <property type="component" value="Chromosome I"/>
</dbReference>
<dbReference type="GO" id="GO:0005737">
    <property type="term" value="C:cytoplasm"/>
    <property type="evidence" value="ECO:0007669"/>
    <property type="project" value="UniProtKB-SubCell"/>
</dbReference>
<dbReference type="GO" id="GO:0003999">
    <property type="term" value="F:adenine phosphoribosyltransferase activity"/>
    <property type="evidence" value="ECO:0007669"/>
    <property type="project" value="UniProtKB-UniRule"/>
</dbReference>
<dbReference type="GO" id="GO:0006168">
    <property type="term" value="P:adenine salvage"/>
    <property type="evidence" value="ECO:0007669"/>
    <property type="project" value="InterPro"/>
</dbReference>
<dbReference type="GO" id="GO:0044209">
    <property type="term" value="P:AMP salvage"/>
    <property type="evidence" value="ECO:0007669"/>
    <property type="project" value="UniProtKB-UniRule"/>
</dbReference>
<dbReference type="GO" id="GO:0006166">
    <property type="term" value="P:purine ribonucleoside salvage"/>
    <property type="evidence" value="ECO:0007669"/>
    <property type="project" value="UniProtKB-KW"/>
</dbReference>
<dbReference type="CDD" id="cd06223">
    <property type="entry name" value="PRTases_typeI"/>
    <property type="match status" value="1"/>
</dbReference>
<dbReference type="FunFam" id="3.40.50.2020:FF:000004">
    <property type="entry name" value="Adenine phosphoribosyltransferase"/>
    <property type="match status" value="1"/>
</dbReference>
<dbReference type="Gene3D" id="3.40.50.2020">
    <property type="match status" value="1"/>
</dbReference>
<dbReference type="HAMAP" id="MF_00004">
    <property type="entry name" value="Aden_phosphoribosyltr"/>
    <property type="match status" value="1"/>
</dbReference>
<dbReference type="InterPro" id="IPR005764">
    <property type="entry name" value="Ade_phspho_trans"/>
</dbReference>
<dbReference type="InterPro" id="IPR050120">
    <property type="entry name" value="Adenine_PRTase"/>
</dbReference>
<dbReference type="InterPro" id="IPR000836">
    <property type="entry name" value="PRibTrfase_dom"/>
</dbReference>
<dbReference type="InterPro" id="IPR029057">
    <property type="entry name" value="PRTase-like"/>
</dbReference>
<dbReference type="NCBIfam" id="NF002634">
    <property type="entry name" value="PRK02304.1-3"/>
    <property type="match status" value="1"/>
</dbReference>
<dbReference type="NCBIfam" id="NF002636">
    <property type="entry name" value="PRK02304.1-5"/>
    <property type="match status" value="1"/>
</dbReference>
<dbReference type="PANTHER" id="PTHR11776">
    <property type="entry name" value="ADENINE PHOSPHORIBOSYLTRANSFERASE"/>
    <property type="match status" value="1"/>
</dbReference>
<dbReference type="PANTHER" id="PTHR11776:SF7">
    <property type="entry name" value="PHOSPHORIBOSYLTRANSFERASE DOMAIN-CONTAINING PROTEIN"/>
    <property type="match status" value="1"/>
</dbReference>
<dbReference type="Pfam" id="PF00156">
    <property type="entry name" value="Pribosyltran"/>
    <property type="match status" value="1"/>
</dbReference>
<dbReference type="SUPFAM" id="SSF53271">
    <property type="entry name" value="PRTase-like"/>
    <property type="match status" value="1"/>
</dbReference>
<dbReference type="PROSITE" id="PS00103">
    <property type="entry name" value="PUR_PYR_PR_TRANSFER"/>
    <property type="match status" value="1"/>
</dbReference>
<feature type="chain" id="PRO_0000321345" description="Adenine phosphoribosyltransferase">
    <location>
        <begin position="1"/>
        <end position="206"/>
    </location>
</feature>
<gene>
    <name evidence="1" type="primary">apt</name>
    <name type="ordered locus">BMA10229_A1521</name>
</gene>
<sequence>MSSDRRTARDCSAVFFGEFHDVHVGRAARSRRVHSQPHPHGAGLAAARRDVSRHHAALQSAKALRVLVDLFVERYVDAKLDYIAGLDARGFIIAPIVAYELSVGFVPIRKVGKLPYATQRESYALEYGTATVEIHEDACKPGDRVVIVDDLIATGGTMMAGKNLLERLGAVVVEGAAIVDLPDLGGSALLREAGLPLYTVTEFPGH</sequence>
<reference key="1">
    <citation type="journal article" date="2010" name="Genome Biol. Evol.">
        <title>Continuing evolution of Burkholderia mallei through genome reduction and large-scale rearrangements.</title>
        <authorList>
            <person name="Losada L."/>
            <person name="Ronning C.M."/>
            <person name="DeShazer D."/>
            <person name="Woods D."/>
            <person name="Fedorova N."/>
            <person name="Kim H.S."/>
            <person name="Shabalina S.A."/>
            <person name="Pearson T.R."/>
            <person name="Brinkac L."/>
            <person name="Tan P."/>
            <person name="Nandi T."/>
            <person name="Crabtree J."/>
            <person name="Badger J."/>
            <person name="Beckstrom-Sternberg S."/>
            <person name="Saqib M."/>
            <person name="Schutzer S.E."/>
            <person name="Keim P."/>
            <person name="Nierman W.C."/>
        </authorList>
    </citation>
    <scope>NUCLEOTIDE SEQUENCE [LARGE SCALE GENOMIC DNA]</scope>
    <source>
        <strain>NCTC 10229</strain>
    </source>
</reference>
<accession>A2S6D4</accession>
<comment type="function">
    <text evidence="1">Catalyzes a salvage reaction resulting in the formation of AMP, that is energically less costly than de novo synthesis.</text>
</comment>
<comment type="catalytic activity">
    <reaction evidence="1">
        <text>AMP + diphosphate = 5-phospho-alpha-D-ribose 1-diphosphate + adenine</text>
        <dbReference type="Rhea" id="RHEA:16609"/>
        <dbReference type="ChEBI" id="CHEBI:16708"/>
        <dbReference type="ChEBI" id="CHEBI:33019"/>
        <dbReference type="ChEBI" id="CHEBI:58017"/>
        <dbReference type="ChEBI" id="CHEBI:456215"/>
        <dbReference type="EC" id="2.4.2.7"/>
    </reaction>
</comment>
<comment type="pathway">
    <text evidence="1">Purine metabolism; AMP biosynthesis via salvage pathway; AMP from adenine: step 1/1.</text>
</comment>
<comment type="subunit">
    <text evidence="1">Homodimer.</text>
</comment>
<comment type="subcellular location">
    <subcellularLocation>
        <location evidence="1">Cytoplasm</location>
    </subcellularLocation>
</comment>
<comment type="similarity">
    <text evidence="1">Belongs to the purine/pyrimidine phosphoribosyltransferase family.</text>
</comment>
<protein>
    <recommendedName>
        <fullName evidence="1">Adenine phosphoribosyltransferase</fullName>
        <shortName evidence="1">APRT</shortName>
        <ecNumber evidence="1">2.4.2.7</ecNumber>
    </recommendedName>
</protein>
<proteinExistence type="inferred from homology"/>
<evidence type="ECO:0000255" key="1">
    <source>
        <dbReference type="HAMAP-Rule" id="MF_00004"/>
    </source>
</evidence>
<keyword id="KW-0963">Cytoplasm</keyword>
<keyword id="KW-0328">Glycosyltransferase</keyword>
<keyword id="KW-0660">Purine salvage</keyword>
<keyword id="KW-0808">Transferase</keyword>
<name>APT_BURM9</name>